<organism>
    <name type="scientific">Burkholderia mallei (strain SAVP1)</name>
    <dbReference type="NCBI Taxonomy" id="320388"/>
    <lineage>
        <taxon>Bacteria</taxon>
        <taxon>Pseudomonadati</taxon>
        <taxon>Pseudomonadota</taxon>
        <taxon>Betaproteobacteria</taxon>
        <taxon>Burkholderiales</taxon>
        <taxon>Burkholderiaceae</taxon>
        <taxon>Burkholderia</taxon>
        <taxon>pseudomallei group</taxon>
    </lineage>
</organism>
<protein>
    <recommendedName>
        <fullName evidence="1">Small ribosomal subunit protein uS4</fullName>
    </recommendedName>
    <alternativeName>
        <fullName evidence="2">30S ribosomal protein S4</fullName>
    </alternativeName>
</protein>
<reference key="1">
    <citation type="journal article" date="2010" name="Genome Biol. Evol.">
        <title>Continuing evolution of Burkholderia mallei through genome reduction and large-scale rearrangements.</title>
        <authorList>
            <person name="Losada L."/>
            <person name="Ronning C.M."/>
            <person name="DeShazer D."/>
            <person name="Woods D."/>
            <person name="Fedorova N."/>
            <person name="Kim H.S."/>
            <person name="Shabalina S.A."/>
            <person name="Pearson T.R."/>
            <person name="Brinkac L."/>
            <person name="Tan P."/>
            <person name="Nandi T."/>
            <person name="Crabtree J."/>
            <person name="Badger J."/>
            <person name="Beckstrom-Sternberg S."/>
            <person name="Saqib M."/>
            <person name="Schutzer S.E."/>
            <person name="Keim P."/>
            <person name="Nierman W.C."/>
        </authorList>
    </citation>
    <scope>NUCLEOTIDE SEQUENCE [LARGE SCALE GENOMIC DNA]</scope>
    <source>
        <strain>SAVP1</strain>
    </source>
</reference>
<accession>A1V878</accession>
<name>RS4_BURMS</name>
<dbReference type="EMBL" id="CP000526">
    <property type="protein sequence ID" value="ABM52371.1"/>
    <property type="molecule type" value="Genomic_DNA"/>
</dbReference>
<dbReference type="RefSeq" id="WP_004197926.1">
    <property type="nucleotide sequence ID" value="NC_008785.1"/>
</dbReference>
<dbReference type="SMR" id="A1V878"/>
<dbReference type="GeneID" id="93061807"/>
<dbReference type="KEGG" id="bmv:BMASAVP1_A3144"/>
<dbReference type="HOGENOM" id="CLU_092403_0_2_4"/>
<dbReference type="GO" id="GO:0015935">
    <property type="term" value="C:small ribosomal subunit"/>
    <property type="evidence" value="ECO:0007669"/>
    <property type="project" value="InterPro"/>
</dbReference>
<dbReference type="GO" id="GO:0019843">
    <property type="term" value="F:rRNA binding"/>
    <property type="evidence" value="ECO:0007669"/>
    <property type="project" value="UniProtKB-UniRule"/>
</dbReference>
<dbReference type="GO" id="GO:0003735">
    <property type="term" value="F:structural constituent of ribosome"/>
    <property type="evidence" value="ECO:0007669"/>
    <property type="project" value="InterPro"/>
</dbReference>
<dbReference type="GO" id="GO:0042274">
    <property type="term" value="P:ribosomal small subunit biogenesis"/>
    <property type="evidence" value="ECO:0007669"/>
    <property type="project" value="TreeGrafter"/>
</dbReference>
<dbReference type="GO" id="GO:0006412">
    <property type="term" value="P:translation"/>
    <property type="evidence" value="ECO:0007669"/>
    <property type="project" value="UniProtKB-UniRule"/>
</dbReference>
<dbReference type="CDD" id="cd00165">
    <property type="entry name" value="S4"/>
    <property type="match status" value="1"/>
</dbReference>
<dbReference type="FunFam" id="1.10.1050.10:FF:000001">
    <property type="entry name" value="30S ribosomal protein S4"/>
    <property type="match status" value="1"/>
</dbReference>
<dbReference type="FunFam" id="3.10.290.10:FF:000001">
    <property type="entry name" value="30S ribosomal protein S4"/>
    <property type="match status" value="1"/>
</dbReference>
<dbReference type="Gene3D" id="1.10.1050.10">
    <property type="entry name" value="Ribosomal Protein S4 Delta 41, Chain A, domain 1"/>
    <property type="match status" value="1"/>
</dbReference>
<dbReference type="Gene3D" id="3.10.290.10">
    <property type="entry name" value="RNA-binding S4 domain"/>
    <property type="match status" value="1"/>
</dbReference>
<dbReference type="HAMAP" id="MF_01306_B">
    <property type="entry name" value="Ribosomal_uS4_B"/>
    <property type="match status" value="1"/>
</dbReference>
<dbReference type="InterPro" id="IPR022801">
    <property type="entry name" value="Ribosomal_uS4"/>
</dbReference>
<dbReference type="InterPro" id="IPR005709">
    <property type="entry name" value="Ribosomal_uS4_bac-type"/>
</dbReference>
<dbReference type="InterPro" id="IPR018079">
    <property type="entry name" value="Ribosomal_uS4_CS"/>
</dbReference>
<dbReference type="InterPro" id="IPR001912">
    <property type="entry name" value="Ribosomal_uS4_N"/>
</dbReference>
<dbReference type="InterPro" id="IPR002942">
    <property type="entry name" value="S4_RNA-bd"/>
</dbReference>
<dbReference type="InterPro" id="IPR036986">
    <property type="entry name" value="S4_RNA-bd_sf"/>
</dbReference>
<dbReference type="NCBIfam" id="NF003717">
    <property type="entry name" value="PRK05327.1"/>
    <property type="match status" value="1"/>
</dbReference>
<dbReference type="NCBIfam" id="TIGR01017">
    <property type="entry name" value="rpsD_bact"/>
    <property type="match status" value="1"/>
</dbReference>
<dbReference type="PANTHER" id="PTHR11831">
    <property type="entry name" value="30S 40S RIBOSOMAL PROTEIN"/>
    <property type="match status" value="1"/>
</dbReference>
<dbReference type="PANTHER" id="PTHR11831:SF4">
    <property type="entry name" value="SMALL RIBOSOMAL SUBUNIT PROTEIN US4M"/>
    <property type="match status" value="1"/>
</dbReference>
<dbReference type="Pfam" id="PF00163">
    <property type="entry name" value="Ribosomal_S4"/>
    <property type="match status" value="1"/>
</dbReference>
<dbReference type="Pfam" id="PF01479">
    <property type="entry name" value="S4"/>
    <property type="match status" value="1"/>
</dbReference>
<dbReference type="SMART" id="SM01390">
    <property type="entry name" value="Ribosomal_S4"/>
    <property type="match status" value="1"/>
</dbReference>
<dbReference type="SMART" id="SM00363">
    <property type="entry name" value="S4"/>
    <property type="match status" value="1"/>
</dbReference>
<dbReference type="SUPFAM" id="SSF55174">
    <property type="entry name" value="Alpha-L RNA-binding motif"/>
    <property type="match status" value="1"/>
</dbReference>
<dbReference type="PROSITE" id="PS00632">
    <property type="entry name" value="RIBOSOMAL_S4"/>
    <property type="match status" value="1"/>
</dbReference>
<dbReference type="PROSITE" id="PS50889">
    <property type="entry name" value="S4"/>
    <property type="match status" value="1"/>
</dbReference>
<evidence type="ECO:0000255" key="1">
    <source>
        <dbReference type="HAMAP-Rule" id="MF_01306"/>
    </source>
</evidence>
<evidence type="ECO:0000305" key="2"/>
<gene>
    <name evidence="1" type="primary">rpsD</name>
    <name type="ordered locus">BMASAVP1_A3144</name>
</gene>
<feature type="chain" id="PRO_0000322274" description="Small ribosomal subunit protein uS4">
    <location>
        <begin position="1"/>
        <end position="207"/>
    </location>
</feature>
<feature type="domain" description="S4 RNA-binding" evidence="1">
    <location>
        <begin position="97"/>
        <end position="160"/>
    </location>
</feature>
<sequence>MARYIGPKAKLSRREGTDLFLKSARRSLADKCKLDSKPGQHGRISGARTSDYGTQLREKQKVKRIYGVLERQFRRYFAEADRRKGNTGETLLQLLESRLDNVVYRMGFGSTRAEARQLVSHKAITVNGIVANIPSQQVKAGDVVAIREKAKKQARIVEALSLAEQGGMPSWVAVDAKKFEGTFKQVPERADIAGDINESLIVELYSR</sequence>
<keyword id="KW-0687">Ribonucleoprotein</keyword>
<keyword id="KW-0689">Ribosomal protein</keyword>
<keyword id="KW-0694">RNA-binding</keyword>
<keyword id="KW-0699">rRNA-binding</keyword>
<comment type="function">
    <text evidence="1">One of the primary rRNA binding proteins, it binds directly to 16S rRNA where it nucleates assembly of the body of the 30S subunit.</text>
</comment>
<comment type="function">
    <text evidence="1">With S5 and S12 plays an important role in translational accuracy.</text>
</comment>
<comment type="subunit">
    <text evidence="1">Part of the 30S ribosomal subunit. Contacts protein S5. The interaction surface between S4 and S5 is involved in control of translational fidelity.</text>
</comment>
<comment type="similarity">
    <text evidence="1">Belongs to the universal ribosomal protein uS4 family.</text>
</comment>
<proteinExistence type="inferred from homology"/>